<evidence type="ECO:0000255" key="1">
    <source>
        <dbReference type="HAMAP-Rule" id="MF_01369"/>
    </source>
</evidence>
<evidence type="ECO:0000305" key="2"/>
<feature type="chain" id="PRO_1000144582" description="Large ribosomal subunit protein uL23">
    <location>
        <begin position="1"/>
        <end position="101"/>
    </location>
</feature>
<organism>
    <name type="scientific">Leptospira biflexa serovar Patoc (strain Patoc 1 / Ames)</name>
    <dbReference type="NCBI Taxonomy" id="355278"/>
    <lineage>
        <taxon>Bacteria</taxon>
        <taxon>Pseudomonadati</taxon>
        <taxon>Spirochaetota</taxon>
        <taxon>Spirochaetia</taxon>
        <taxon>Leptospirales</taxon>
        <taxon>Leptospiraceae</taxon>
        <taxon>Leptospira</taxon>
    </lineage>
</organism>
<reference key="1">
    <citation type="journal article" date="2008" name="PLoS ONE">
        <title>Genome sequence of the saprophyte Leptospira biflexa provides insights into the evolution of Leptospira and the pathogenesis of leptospirosis.</title>
        <authorList>
            <person name="Picardeau M."/>
            <person name="Bulach D.M."/>
            <person name="Bouchier C."/>
            <person name="Zuerner R.L."/>
            <person name="Zidane N."/>
            <person name="Wilson P.J."/>
            <person name="Creno S."/>
            <person name="Kuczek E.S."/>
            <person name="Bommezzadri S."/>
            <person name="Davis J.C."/>
            <person name="McGrath A."/>
            <person name="Johnson M.J."/>
            <person name="Boursaux-Eude C."/>
            <person name="Seemann T."/>
            <person name="Rouy Z."/>
            <person name="Coppel R.L."/>
            <person name="Rood J.I."/>
            <person name="Lajus A."/>
            <person name="Davies J.K."/>
            <person name="Medigue C."/>
            <person name="Adler B."/>
        </authorList>
    </citation>
    <scope>NUCLEOTIDE SEQUENCE [LARGE SCALE GENOMIC DNA]</scope>
    <source>
        <strain>Patoc 1 / Ames</strain>
    </source>
</reference>
<keyword id="KW-0687">Ribonucleoprotein</keyword>
<keyword id="KW-0689">Ribosomal protein</keyword>
<keyword id="KW-0694">RNA-binding</keyword>
<keyword id="KW-0699">rRNA-binding</keyword>
<sequence length="101" mass="11554">MNLENVILSPVVTEKSQDLQTIGERMGKRTVKYTFKVHPDANKTLIKQALKQMYNVVPTNVNVAVYRGKMKRFRNMPSQRPHYKKAVVTFADGANLDFAKV</sequence>
<accession>B0SAF2</accession>
<name>RL23_LEPBA</name>
<protein>
    <recommendedName>
        <fullName evidence="1">Large ribosomal subunit protein uL23</fullName>
    </recommendedName>
    <alternativeName>
        <fullName evidence="2">50S ribosomal protein L23</fullName>
    </alternativeName>
</protein>
<dbReference type="EMBL" id="CP000777">
    <property type="protein sequence ID" value="ABZ94415.1"/>
    <property type="molecule type" value="Genomic_DNA"/>
</dbReference>
<dbReference type="RefSeq" id="WP_012388938.1">
    <property type="nucleotide sequence ID" value="NC_010842.1"/>
</dbReference>
<dbReference type="SMR" id="B0SAF2"/>
<dbReference type="KEGG" id="lbf:LBF_1911"/>
<dbReference type="HOGENOM" id="CLU_037562_3_2_12"/>
<dbReference type="GO" id="GO:1990904">
    <property type="term" value="C:ribonucleoprotein complex"/>
    <property type="evidence" value="ECO:0007669"/>
    <property type="project" value="UniProtKB-KW"/>
</dbReference>
<dbReference type="GO" id="GO:0005840">
    <property type="term" value="C:ribosome"/>
    <property type="evidence" value="ECO:0007669"/>
    <property type="project" value="UniProtKB-KW"/>
</dbReference>
<dbReference type="GO" id="GO:0019843">
    <property type="term" value="F:rRNA binding"/>
    <property type="evidence" value="ECO:0007669"/>
    <property type="project" value="UniProtKB-UniRule"/>
</dbReference>
<dbReference type="GO" id="GO:0003735">
    <property type="term" value="F:structural constituent of ribosome"/>
    <property type="evidence" value="ECO:0007669"/>
    <property type="project" value="InterPro"/>
</dbReference>
<dbReference type="GO" id="GO:0006412">
    <property type="term" value="P:translation"/>
    <property type="evidence" value="ECO:0007669"/>
    <property type="project" value="UniProtKB-UniRule"/>
</dbReference>
<dbReference type="Gene3D" id="3.30.70.330">
    <property type="match status" value="1"/>
</dbReference>
<dbReference type="HAMAP" id="MF_01369_B">
    <property type="entry name" value="Ribosomal_uL23_B"/>
    <property type="match status" value="1"/>
</dbReference>
<dbReference type="InterPro" id="IPR012677">
    <property type="entry name" value="Nucleotide-bd_a/b_plait_sf"/>
</dbReference>
<dbReference type="InterPro" id="IPR013025">
    <property type="entry name" value="Ribosomal_uL23-like"/>
</dbReference>
<dbReference type="InterPro" id="IPR012678">
    <property type="entry name" value="Ribosomal_uL23/eL15/eS24_sf"/>
</dbReference>
<dbReference type="NCBIfam" id="NF004363">
    <property type="entry name" value="PRK05738.2-4"/>
    <property type="match status" value="1"/>
</dbReference>
<dbReference type="NCBIfam" id="NF004369">
    <property type="entry name" value="PRK05738.3-5"/>
    <property type="match status" value="1"/>
</dbReference>
<dbReference type="Pfam" id="PF00276">
    <property type="entry name" value="Ribosomal_L23"/>
    <property type="match status" value="1"/>
</dbReference>
<dbReference type="SUPFAM" id="SSF54189">
    <property type="entry name" value="Ribosomal proteins S24e, L23 and L15e"/>
    <property type="match status" value="1"/>
</dbReference>
<comment type="function">
    <text evidence="1">One of the early assembly proteins it binds 23S rRNA. One of the proteins that surrounds the polypeptide exit tunnel on the outside of the ribosome. Forms the main docking site for trigger factor binding to the ribosome.</text>
</comment>
<comment type="subunit">
    <text evidence="1">Part of the 50S ribosomal subunit. Contacts protein L29, and trigger factor when it is bound to the ribosome.</text>
</comment>
<comment type="similarity">
    <text evidence="1">Belongs to the universal ribosomal protein uL23 family.</text>
</comment>
<gene>
    <name evidence="1" type="primary">rplW</name>
    <name type="ordered locus">LBF_1911</name>
</gene>
<proteinExistence type="inferred from homology"/>